<keyword id="KW-1185">Reference proteome</keyword>
<keyword id="KW-0687">Ribonucleoprotein</keyword>
<keyword id="KW-0689">Ribosomal protein</keyword>
<gene>
    <name evidence="1" type="primary">rpsP</name>
    <name type="ordered locus">TTE1461</name>
</gene>
<reference key="1">
    <citation type="journal article" date="2002" name="Genome Res.">
        <title>A complete sequence of the T. tengcongensis genome.</title>
        <authorList>
            <person name="Bao Q."/>
            <person name="Tian Y."/>
            <person name="Li W."/>
            <person name="Xu Z."/>
            <person name="Xuan Z."/>
            <person name="Hu S."/>
            <person name="Dong W."/>
            <person name="Yang J."/>
            <person name="Chen Y."/>
            <person name="Xue Y."/>
            <person name="Xu Y."/>
            <person name="Lai X."/>
            <person name="Huang L."/>
            <person name="Dong X."/>
            <person name="Ma Y."/>
            <person name="Ling L."/>
            <person name="Tan H."/>
            <person name="Chen R."/>
            <person name="Wang J."/>
            <person name="Yu J."/>
            <person name="Yang H."/>
        </authorList>
    </citation>
    <scope>NUCLEOTIDE SEQUENCE [LARGE SCALE GENOMIC DNA]</scope>
    <source>
        <strain>DSM 15242 / JCM 11007 / NBRC 100824 / MB4</strain>
    </source>
</reference>
<feature type="chain" id="PRO_0000167271" description="Small ribosomal subunit protein bS16">
    <location>
        <begin position="1"/>
        <end position="82"/>
    </location>
</feature>
<dbReference type="EMBL" id="AE008691">
    <property type="protein sequence ID" value="AAM24683.1"/>
    <property type="molecule type" value="Genomic_DNA"/>
</dbReference>
<dbReference type="RefSeq" id="WP_011025728.1">
    <property type="nucleotide sequence ID" value="NZ_JANUCV010000001.1"/>
</dbReference>
<dbReference type="SMR" id="Q8R9X1"/>
<dbReference type="STRING" id="273068.TTE1461"/>
<dbReference type="KEGG" id="tte:TTE1461"/>
<dbReference type="eggNOG" id="COG0228">
    <property type="taxonomic scope" value="Bacteria"/>
</dbReference>
<dbReference type="HOGENOM" id="CLU_100590_5_0_9"/>
<dbReference type="OrthoDB" id="9807878at2"/>
<dbReference type="Proteomes" id="UP000000555">
    <property type="component" value="Chromosome"/>
</dbReference>
<dbReference type="GO" id="GO:0005737">
    <property type="term" value="C:cytoplasm"/>
    <property type="evidence" value="ECO:0007669"/>
    <property type="project" value="UniProtKB-ARBA"/>
</dbReference>
<dbReference type="GO" id="GO:0015935">
    <property type="term" value="C:small ribosomal subunit"/>
    <property type="evidence" value="ECO:0007669"/>
    <property type="project" value="TreeGrafter"/>
</dbReference>
<dbReference type="GO" id="GO:0003735">
    <property type="term" value="F:structural constituent of ribosome"/>
    <property type="evidence" value="ECO:0007669"/>
    <property type="project" value="InterPro"/>
</dbReference>
<dbReference type="GO" id="GO:0006412">
    <property type="term" value="P:translation"/>
    <property type="evidence" value="ECO:0007669"/>
    <property type="project" value="UniProtKB-UniRule"/>
</dbReference>
<dbReference type="FunFam" id="3.30.1320.10:FF:000002">
    <property type="entry name" value="30S ribosomal protein S16"/>
    <property type="match status" value="1"/>
</dbReference>
<dbReference type="Gene3D" id="3.30.1320.10">
    <property type="match status" value="1"/>
</dbReference>
<dbReference type="HAMAP" id="MF_00385">
    <property type="entry name" value="Ribosomal_bS16"/>
    <property type="match status" value="1"/>
</dbReference>
<dbReference type="InterPro" id="IPR000307">
    <property type="entry name" value="Ribosomal_bS16"/>
</dbReference>
<dbReference type="InterPro" id="IPR020592">
    <property type="entry name" value="Ribosomal_bS16_CS"/>
</dbReference>
<dbReference type="InterPro" id="IPR023803">
    <property type="entry name" value="Ribosomal_bS16_dom_sf"/>
</dbReference>
<dbReference type="NCBIfam" id="TIGR00002">
    <property type="entry name" value="S16"/>
    <property type="match status" value="1"/>
</dbReference>
<dbReference type="PANTHER" id="PTHR12919">
    <property type="entry name" value="30S RIBOSOMAL PROTEIN S16"/>
    <property type="match status" value="1"/>
</dbReference>
<dbReference type="PANTHER" id="PTHR12919:SF20">
    <property type="entry name" value="SMALL RIBOSOMAL SUBUNIT PROTEIN BS16M"/>
    <property type="match status" value="1"/>
</dbReference>
<dbReference type="Pfam" id="PF00886">
    <property type="entry name" value="Ribosomal_S16"/>
    <property type="match status" value="1"/>
</dbReference>
<dbReference type="SUPFAM" id="SSF54565">
    <property type="entry name" value="Ribosomal protein S16"/>
    <property type="match status" value="1"/>
</dbReference>
<dbReference type="PROSITE" id="PS00732">
    <property type="entry name" value="RIBOSOMAL_S16"/>
    <property type="match status" value="1"/>
</dbReference>
<name>RS16_CALS4</name>
<organism>
    <name type="scientific">Caldanaerobacter subterraneus subsp. tengcongensis (strain DSM 15242 / JCM 11007 / NBRC 100824 / MB4)</name>
    <name type="common">Thermoanaerobacter tengcongensis</name>
    <dbReference type="NCBI Taxonomy" id="273068"/>
    <lineage>
        <taxon>Bacteria</taxon>
        <taxon>Bacillati</taxon>
        <taxon>Bacillota</taxon>
        <taxon>Clostridia</taxon>
        <taxon>Thermoanaerobacterales</taxon>
        <taxon>Thermoanaerobacteraceae</taxon>
        <taxon>Caldanaerobacter</taxon>
    </lineage>
</organism>
<proteinExistence type="inferred from homology"/>
<protein>
    <recommendedName>
        <fullName evidence="1">Small ribosomal subunit protein bS16</fullName>
    </recommendedName>
    <alternativeName>
        <fullName evidence="2">30S ribosomal protein S16</fullName>
    </alternativeName>
</protein>
<sequence length="82" mass="9422">MAVRIRLKRFGAKKRPFYRIVVADSRSPRDGRFIDEIGYYNPIAEPAEIKIDVEKAKKWLSVGAQPSDTVKSLFRKEGIINN</sequence>
<evidence type="ECO:0000255" key="1">
    <source>
        <dbReference type="HAMAP-Rule" id="MF_00385"/>
    </source>
</evidence>
<evidence type="ECO:0000305" key="2"/>
<comment type="similarity">
    <text evidence="1">Belongs to the bacterial ribosomal protein bS16 family.</text>
</comment>
<accession>Q8R9X1</accession>